<keyword id="KW-0052">Apoplast</keyword>
<keyword id="KW-0134">Cell wall</keyword>
<keyword id="KW-0961">Cell wall biogenesis/degradation</keyword>
<keyword id="KW-1015">Disulfide bond</keyword>
<keyword id="KW-0292">Fruit ripening</keyword>
<keyword id="KW-0325">Glycoprotein</keyword>
<keyword id="KW-0326">Glycosidase</keyword>
<keyword id="KW-0328">Glycosyltransferase</keyword>
<keyword id="KW-0378">Hydrolase</keyword>
<keyword id="KW-0964">Secreted</keyword>
<keyword id="KW-0732">Signal</keyword>
<keyword id="KW-0808">Transferase</keyword>
<protein>
    <recommendedName>
        <fullName evidence="12">Xyloglucan endotransglucosylase protein 2</fullName>
        <shortName evidence="12">XET protein 2</shortName>
        <ecNumber evidence="7 9">2.4.1.207</ecNumber>
    </recommendedName>
    <alternativeName>
        <fullName evidence="10 11">DkXTH2</fullName>
    </alternativeName>
    <alternativeName>
        <fullName evidence="12">Xyloglucan endotransglucosylase/hydrolase protein 2</fullName>
        <shortName evidence="12">XTH protein 2</shortName>
    </alternativeName>
</protein>
<proteinExistence type="evidence at protein level"/>
<reference evidence="13" key="1">
    <citation type="journal article" date="2013" name="Food Chem.">
        <title>Identification of xyloglucan endotransglucosylase/hydrolase genes (XTHs) and their expression in persimmon fruit as influenced by 1-methylcyclopropene and gibberellic acid during storage at ambient temperature.</title>
        <authorList>
            <person name="Zhu Q."/>
            <person name="Zhang Z."/>
            <person name="Rao J."/>
            <person name="Huber D.J."/>
            <person name="Lv J."/>
            <person name="Hou Y."/>
            <person name="Song K."/>
        </authorList>
    </citation>
    <scope>NUCLEOTIDE SEQUENCE [MRNA]</scope>
    <scope>TISSUE SPECIFICITY</scope>
    <scope>DEVELOPMENTAL STAGE</scope>
    <scope>INDUCTION</scope>
    <scope>PHYLOGENETIC ANALYSIS</scope>
    <source>
        <strain evidence="10">cv. Fuping Jianshi</strain>
        <tissue evidence="10 13">Fruit flesh</tissue>
    </source>
</reference>
<reference key="2">
    <citation type="journal article" date="2015" name="PLoS ONE">
        <title>Analysis of xyloglucan endotransglycosylase/hydrolase (XTH) genes and diverse roles of isoenzymes during persimmon fruit development and postharvest softening.</title>
        <authorList>
            <person name="Han Y."/>
            <person name="Zhu Q."/>
            <person name="Zhang Z."/>
            <person name="Meng K."/>
            <person name="Hou Y."/>
            <person name="Ban Q."/>
            <person name="Suo J."/>
            <person name="Rao J."/>
        </authorList>
    </citation>
    <scope>FUNCTION</scope>
    <scope>CATALYTIC ACTIVITY</scope>
    <scope>BIOPHYSICOCHEMICAL PROPERTIES</scope>
    <scope>SUBCELLULAR LOCATION</scope>
    <scope>TISSUE SPECIFICITY</scope>
    <scope>DEVELOPMENTAL STAGE</scope>
    <scope>INDUCTION</scope>
    <scope>PHYLOGENETIC ANALYSIS</scope>
    <source>
        <strain evidence="11">cv. Fuping Jianshi</strain>
    </source>
</reference>
<comment type="function">
    <text evidence="9">Catalyzes xyloglucan endotransglycosylation (XET). Cleaves and religates xyloglucan polymers. Does not catalyze xyloglucan endohydrolysis (XEH). Probably involved in cell wall restructuring during fruit ripening and postharvest fruit softening.</text>
</comment>
<comment type="catalytic activity">
    <reaction evidence="7 9">
        <text>breaks a beta-(1-&gt;4) bond in the backbone of a xyloglucan and transfers the xyloglucanyl segment on to O-4 of the non-reducing terminal glucose residue of an acceptor, which can be a xyloglucan or an oligosaccharide of xyloglucan.</text>
        <dbReference type="EC" id="2.4.1.207"/>
    </reaction>
</comment>
<comment type="biophysicochemical properties">
    <phDependence>
        <text evidence="9">Optimum pH is between 4.5-6.5. Loses activity rapidly when pH is lowered from 5 to 4.</text>
    </phDependence>
</comment>
<comment type="subcellular location">
    <subcellularLocation>
        <location evidence="7 9">Secreted</location>
        <location evidence="7 9">Cell wall</location>
    </subcellularLocation>
    <subcellularLocation>
        <location evidence="7">Secreted</location>
        <location evidence="7">Extracellular space</location>
        <location evidence="7">Apoplast</location>
    </subcellularLocation>
</comment>
<comment type="tissue specificity">
    <text evidence="8 9">Expressed in fruit pulp.</text>
</comment>
<comment type="developmental stage">
    <text evidence="8 9">Expressed during fruit ripening (PubMed:23265513, PubMed:25849978). During storage, highest expression in fruits on day 12, decreasing sharply thereafter until end of storage (day 18) (PubMed:23265513). Expression is low in immature growing fruits, but increases significantly during the mature stage with the highest expression 120 days after full bloom. Expression in fruits is rapidly increased during storage at 25 degrees Celsius, with the highest expression on day 12, after which the expression decreases steadily until the end of storage (PubMed:25849978).</text>
</comment>
<comment type="induction">
    <text evidence="8 9">In fruits, expression is greatly decreased by gibberellic acid (GA3) on day 12 of storage and by 1-methylcyclopropene (1-MCP) until day 12 of storage (PubMed:23265513). Expression in fruits is also decreased by low (0 degrees Celsius) temperature treatment throughout the storage (PubMed:25849978).</text>
</comment>
<comment type="PTM">
    <text evidence="7">Contains at least one intrachain disulfide bond essential for its enzymatic activity.</text>
</comment>
<comment type="similarity">
    <text evidence="12">Belongs to the glycosyl hydrolase 16 family. XTH group 1 subfamily.</text>
</comment>
<organism evidence="13">
    <name type="scientific">Diospyros kaki</name>
    <name type="common">Kaki persimmon</name>
    <name type="synonym">Diospyros chinensis</name>
    <dbReference type="NCBI Taxonomy" id="35925"/>
    <lineage>
        <taxon>Eukaryota</taxon>
        <taxon>Viridiplantae</taxon>
        <taxon>Streptophyta</taxon>
        <taxon>Embryophyta</taxon>
        <taxon>Tracheophyta</taxon>
        <taxon>Spermatophyta</taxon>
        <taxon>Magnoliopsida</taxon>
        <taxon>eudicotyledons</taxon>
        <taxon>Gunneridae</taxon>
        <taxon>Pentapetalae</taxon>
        <taxon>asterids</taxon>
        <taxon>Ericales</taxon>
        <taxon>Ebenaceae</taxon>
        <taxon>Diospyros</taxon>
    </lineage>
</organism>
<name>XTH2_DIOKA</name>
<evidence type="ECO:0000250" key="1">
    <source>
        <dbReference type="UniProtKB" id="Q8GZD5"/>
    </source>
</evidence>
<evidence type="ECO:0000255" key="2">
    <source>
        <dbReference type="PIRSR" id="PIRSR005604-1"/>
    </source>
</evidence>
<evidence type="ECO:0000255" key="3">
    <source>
        <dbReference type="PIRSR" id="PIRSR005604-2"/>
    </source>
</evidence>
<evidence type="ECO:0000255" key="4">
    <source>
        <dbReference type="PROSITE-ProRule" id="PRU00498"/>
    </source>
</evidence>
<evidence type="ECO:0000255" key="5">
    <source>
        <dbReference type="PROSITE-ProRule" id="PRU01098"/>
    </source>
</evidence>
<evidence type="ECO:0000255" key="6">
    <source>
        <dbReference type="PROSITE-ProRule" id="PRU10064"/>
    </source>
</evidence>
<evidence type="ECO:0000255" key="7">
    <source>
        <dbReference type="RuleBase" id="RU361120"/>
    </source>
</evidence>
<evidence type="ECO:0000269" key="8">
    <source>
    </source>
</evidence>
<evidence type="ECO:0000269" key="9">
    <source>
    </source>
</evidence>
<evidence type="ECO:0000303" key="10">
    <source>
    </source>
</evidence>
<evidence type="ECO:0000303" key="11">
    <source>
    </source>
</evidence>
<evidence type="ECO:0000305" key="12"/>
<evidence type="ECO:0000312" key="13">
    <source>
        <dbReference type="EMBL" id="AEQ37176.1"/>
    </source>
</evidence>
<gene>
    <name evidence="10 11 13" type="primary">XTH2</name>
</gene>
<sequence>MAMGTHFGGLWLALLCMVSATMGAVPRKPVDVPFGRNYVPTWAFDHIKYFNGGSQIQLSLDKYTGTGFQSKGSYLFGHFSMQIKMVPGDSAGTVTAFYLSSQNSEHDEIDFEFLGNRTGQPYILQTNVFTGGKGDREQRIFLWFDPTKEYHSYSVLWNLFLIIFFVDDVPIRVFKNSKDLGVRFPFDQPMKIYSSLWNADDWATRGGLEKTDWSKAPFVASYRSFHVDGCEASVNAKFCDTQGKRWWDQKEFQDLDSFQYRRLRWVRSKYTIYNYCTDRKRYPVMPPECKRDRDI</sequence>
<accession>G5DAC7</accession>
<dbReference type="EC" id="2.4.1.207" evidence="7 9"/>
<dbReference type="EMBL" id="JN605345">
    <property type="protein sequence ID" value="AEQ37176.1"/>
    <property type="molecule type" value="mRNA"/>
</dbReference>
<dbReference type="SMR" id="G5DAC7"/>
<dbReference type="GlyCosmos" id="G5DAC7">
    <property type="glycosylation" value="1 site, No reported glycans"/>
</dbReference>
<dbReference type="BRENDA" id="2.4.1.207">
    <property type="organism ID" value="7744"/>
</dbReference>
<dbReference type="GO" id="GO:0048046">
    <property type="term" value="C:apoplast"/>
    <property type="evidence" value="ECO:0007669"/>
    <property type="project" value="UniProtKB-SubCell"/>
</dbReference>
<dbReference type="GO" id="GO:0004553">
    <property type="term" value="F:hydrolase activity, hydrolyzing O-glycosyl compounds"/>
    <property type="evidence" value="ECO:0007669"/>
    <property type="project" value="InterPro"/>
</dbReference>
<dbReference type="GO" id="GO:0016762">
    <property type="term" value="F:xyloglucan:xyloglucosyl transferase activity"/>
    <property type="evidence" value="ECO:0007669"/>
    <property type="project" value="UniProtKB-EC"/>
</dbReference>
<dbReference type="GO" id="GO:0042546">
    <property type="term" value="P:cell wall biogenesis"/>
    <property type="evidence" value="ECO:0007669"/>
    <property type="project" value="InterPro"/>
</dbReference>
<dbReference type="GO" id="GO:0071555">
    <property type="term" value="P:cell wall organization"/>
    <property type="evidence" value="ECO:0007669"/>
    <property type="project" value="UniProtKB-KW"/>
</dbReference>
<dbReference type="GO" id="GO:0009835">
    <property type="term" value="P:fruit ripening"/>
    <property type="evidence" value="ECO:0007669"/>
    <property type="project" value="UniProtKB-KW"/>
</dbReference>
<dbReference type="GO" id="GO:0010411">
    <property type="term" value="P:xyloglucan metabolic process"/>
    <property type="evidence" value="ECO:0007669"/>
    <property type="project" value="InterPro"/>
</dbReference>
<dbReference type="CDD" id="cd02176">
    <property type="entry name" value="GH16_XET"/>
    <property type="match status" value="1"/>
</dbReference>
<dbReference type="FunFam" id="2.60.120.200:FF:000025">
    <property type="entry name" value="Xyloglucan endotransglucosylase/hydrolase"/>
    <property type="match status" value="1"/>
</dbReference>
<dbReference type="Gene3D" id="2.60.120.200">
    <property type="match status" value="1"/>
</dbReference>
<dbReference type="InterPro" id="IPR044791">
    <property type="entry name" value="Beta-glucanase/XTH"/>
</dbReference>
<dbReference type="InterPro" id="IPR013320">
    <property type="entry name" value="ConA-like_dom_sf"/>
</dbReference>
<dbReference type="InterPro" id="IPR000757">
    <property type="entry name" value="GH16"/>
</dbReference>
<dbReference type="InterPro" id="IPR008263">
    <property type="entry name" value="GH16_AS"/>
</dbReference>
<dbReference type="InterPro" id="IPR010713">
    <property type="entry name" value="XET_C"/>
</dbReference>
<dbReference type="InterPro" id="IPR016455">
    <property type="entry name" value="XTH"/>
</dbReference>
<dbReference type="PANTHER" id="PTHR31062">
    <property type="entry name" value="XYLOGLUCAN ENDOTRANSGLUCOSYLASE/HYDROLASE PROTEIN 8-RELATED"/>
    <property type="match status" value="1"/>
</dbReference>
<dbReference type="Pfam" id="PF00722">
    <property type="entry name" value="Glyco_hydro_16"/>
    <property type="match status" value="1"/>
</dbReference>
<dbReference type="Pfam" id="PF06955">
    <property type="entry name" value="XET_C"/>
    <property type="match status" value="1"/>
</dbReference>
<dbReference type="PIRSF" id="PIRSF005604">
    <property type="entry name" value="XET"/>
    <property type="match status" value="1"/>
</dbReference>
<dbReference type="SUPFAM" id="SSF49899">
    <property type="entry name" value="Concanavalin A-like lectins/glucanases"/>
    <property type="match status" value="1"/>
</dbReference>
<dbReference type="PROSITE" id="PS01034">
    <property type="entry name" value="GH16_1"/>
    <property type="match status" value="1"/>
</dbReference>
<dbReference type="PROSITE" id="PS51762">
    <property type="entry name" value="GH16_2"/>
    <property type="match status" value="1"/>
</dbReference>
<feature type="signal peptide" evidence="7">
    <location>
        <begin position="1"/>
        <end position="23"/>
    </location>
</feature>
<feature type="chain" id="PRO_5005132397" description="Xyloglucan endotransglucosylase protein 2" evidence="7">
    <location>
        <begin position="24"/>
        <end position="295"/>
    </location>
</feature>
<feature type="domain" description="GH16" evidence="5 12">
    <location>
        <begin position="24"/>
        <end position="222"/>
    </location>
</feature>
<feature type="active site" description="Nucleophile" evidence="2 6">
    <location>
        <position position="108"/>
    </location>
</feature>
<feature type="active site" description="Proton donor" evidence="2 6">
    <location>
        <position position="112"/>
    </location>
</feature>
<feature type="binding site" evidence="1">
    <location>
        <position position="112"/>
    </location>
    <ligand>
        <name>xyloglucan</name>
        <dbReference type="ChEBI" id="CHEBI:18233"/>
    </ligand>
</feature>
<feature type="binding site" evidence="1">
    <location>
        <begin position="125"/>
        <end position="127"/>
    </location>
    <ligand>
        <name>xyloglucan</name>
        <dbReference type="ChEBI" id="CHEBI:18233"/>
    </ligand>
</feature>
<feature type="binding site" evidence="1">
    <location>
        <begin position="135"/>
        <end position="137"/>
    </location>
    <ligand>
        <name>xyloglucan</name>
        <dbReference type="ChEBI" id="CHEBI:18233"/>
    </ligand>
</feature>
<feature type="binding site" evidence="1">
    <location>
        <begin position="201"/>
        <end position="202"/>
    </location>
    <ligand>
        <name>xyloglucan</name>
        <dbReference type="ChEBI" id="CHEBI:18233"/>
    </ligand>
</feature>
<feature type="binding site" evidence="1">
    <location>
        <position position="206"/>
    </location>
    <ligand>
        <name>xyloglucan</name>
        <dbReference type="ChEBI" id="CHEBI:18233"/>
    </ligand>
</feature>
<feature type="binding site" evidence="1">
    <location>
        <position position="281"/>
    </location>
    <ligand>
        <name>xyloglucan</name>
        <dbReference type="ChEBI" id="CHEBI:18233"/>
    </ligand>
</feature>
<feature type="site" description="Important for catalytic activity" evidence="1">
    <location>
        <position position="110"/>
    </location>
</feature>
<feature type="glycosylation site" description="N-linked (GlcNAc...) asparagine" evidence="3 4">
    <location>
        <position position="116"/>
    </location>
</feature>
<feature type="disulfide bond" evidence="1">
    <location>
        <begin position="230"/>
        <end position="239"/>
    </location>
</feature>
<feature type="disulfide bond" evidence="1">
    <location>
        <begin position="276"/>
        <end position="289"/>
    </location>
</feature>